<comment type="function">
    <text>Proposed to provide activated sulfate for transfer to nod factor.</text>
</comment>
<comment type="catalytic activity">
    <reaction>
        <text>sulfate + ATP + H(+) = adenosine 5'-phosphosulfate + diphosphate</text>
        <dbReference type="Rhea" id="RHEA:18133"/>
        <dbReference type="ChEBI" id="CHEBI:15378"/>
        <dbReference type="ChEBI" id="CHEBI:16189"/>
        <dbReference type="ChEBI" id="CHEBI:30616"/>
        <dbReference type="ChEBI" id="CHEBI:33019"/>
        <dbReference type="ChEBI" id="CHEBI:58243"/>
        <dbReference type="EC" id="2.7.7.4"/>
    </reaction>
</comment>
<comment type="subunit">
    <text evidence="2">Sulfate-activating enzymes, NodP and NodQ, may be physically associated.</text>
</comment>
<comment type="similarity">
    <text evidence="2">Belongs to the PAPS reductase family. CysD subfamily.</text>
</comment>
<comment type="sequence caution" evidence="2">
    <conflict type="erroneous initiation">
        <sequence resource="EMBL-CDS" id="AAS83004"/>
    </conflict>
</comment>
<keyword id="KW-0067">ATP-binding</keyword>
<keyword id="KW-0536">Nodulation</keyword>
<keyword id="KW-0547">Nucleotide-binding</keyword>
<keyword id="KW-0548">Nucleotidyltransferase</keyword>
<keyword id="KW-0614">Plasmid</keyword>
<keyword id="KW-0808">Transferase</keyword>
<organism>
    <name type="scientific">Azospirillum brasilense</name>
    <dbReference type="NCBI Taxonomy" id="192"/>
    <lineage>
        <taxon>Bacteria</taxon>
        <taxon>Pseudomonadati</taxon>
        <taxon>Pseudomonadota</taxon>
        <taxon>Alphaproteobacteria</taxon>
        <taxon>Rhodospirillales</taxon>
        <taxon>Azospirillaceae</taxon>
        <taxon>Azospirillum</taxon>
    </lineage>
</organism>
<gene>
    <name type="primary">nodP</name>
    <name type="ORF">pRhico025</name>
</gene>
<accession>P28603</accession>
<accession>Q6QW78</accession>
<proteinExistence type="inferred from homology"/>
<geneLocation type="plasmid">
    <name>pRhico</name>
    <name>90-MDa megaplasmid</name>
</geneLocation>
<reference key="1">
    <citation type="journal article" date="1990" name="Mol. Plant Microbe Interact.">
        <title>Characterization of two Azospirillum brasilense Sp7 plasmid genes homologous to Rhizobium meliloti nodPQ.</title>
        <authorList>
            <person name="Vieille C."/>
            <person name="Elmerich C."/>
        </authorList>
    </citation>
    <scope>NUCLEOTIDE SEQUENCE [GENOMIC DNA]</scope>
    <source>
        <strain>ATCC 29145 / DSM 1690 / IMET 11303 / Sp7</strain>
    </source>
</reference>
<reference key="2">
    <citation type="journal article" date="2004" name="FEMS Microbiol. Lett.">
        <title>Annotation of the pRhico plasmid of Azospirillum brasilense reveals its role in determining the outer surface composition.</title>
        <authorList>
            <person name="Vanbleu E."/>
            <person name="Marchal K."/>
            <person name="Lambrecht M."/>
            <person name="Mathys J."/>
            <person name="Vanderleyden J."/>
        </authorList>
    </citation>
    <scope>NUCLEOTIDE SEQUENCE [GENOMIC DNA]</scope>
    <source>
        <strain>ATCC 29145 / DSM 1690 / IMET 11303 / Sp7</strain>
    </source>
</reference>
<sequence length="301" mass="34137">MPTLPNDLRLLEAESIAILRETAASFTKPVLLYSIGKDSGVLLHLARKAFHPSPVPFPLLHVDTGWKFREMIAFRDATVRRLGLTLIVHRNEEGHARGIDPIRSGSALHTRVMKTEALRQALDRHGFDAAIGGARRDEEKSRAKERVFSIRNAAHAWDPRDQRPELWRLWNPRIQPGESVRVFPLSNWTELDVWRYVAAQSIPVVPLYFAAERPVVHRSGALIMVDDGRLPLNPGETPEMRRVRFRTLGCYPLSGAIDSDAATVEDIIVEMRASRTSERQGRLIDGDEPASMERKKREGYF</sequence>
<protein>
    <recommendedName>
        <fullName>Sulfate adenylyltransferase subunit 2</fullName>
        <ecNumber>2.7.7.4</ecNumber>
    </recommendedName>
    <alternativeName>
        <fullName>ATP-sulfurylase small subunit</fullName>
    </alternativeName>
    <alternativeName>
        <fullName>Nodulation protein P</fullName>
    </alternativeName>
    <alternativeName>
        <fullName>Sulfate adenylate transferase</fullName>
        <shortName>SAT</shortName>
    </alternativeName>
</protein>
<evidence type="ECO:0000256" key="1">
    <source>
        <dbReference type="SAM" id="MobiDB-lite"/>
    </source>
</evidence>
<evidence type="ECO:0000305" key="2"/>
<name>NODP_AZOBR</name>
<feature type="chain" id="PRO_0000100684" description="Sulfate adenylyltransferase subunit 2">
    <location>
        <begin position="1"/>
        <end position="301"/>
    </location>
</feature>
<feature type="region of interest" description="Disordered" evidence="1">
    <location>
        <begin position="278"/>
        <end position="301"/>
    </location>
</feature>
<dbReference type="EC" id="2.7.7.4"/>
<dbReference type="EMBL" id="M94886">
    <property type="protein sequence ID" value="AAA22185.1"/>
    <property type="molecule type" value="Genomic_DNA"/>
</dbReference>
<dbReference type="EMBL" id="AY523973">
    <property type="protein sequence ID" value="AAS83004.1"/>
    <property type="status" value="ALT_INIT"/>
    <property type="molecule type" value="Genomic_DNA"/>
</dbReference>
<dbReference type="PIR" id="I39754">
    <property type="entry name" value="I39754"/>
</dbReference>
<dbReference type="RefSeq" id="WP_035683265.1">
    <property type="nucleotide sequence ID" value="NZ_CP012919.1"/>
</dbReference>
<dbReference type="SMR" id="P28603"/>
<dbReference type="GeneID" id="56449449"/>
<dbReference type="GO" id="GO:0005524">
    <property type="term" value="F:ATP binding"/>
    <property type="evidence" value="ECO:0007669"/>
    <property type="project" value="UniProtKB-KW"/>
</dbReference>
<dbReference type="GO" id="GO:0004781">
    <property type="term" value="F:sulfate adenylyltransferase (ATP) activity"/>
    <property type="evidence" value="ECO:0007669"/>
    <property type="project" value="UniProtKB-UniRule"/>
</dbReference>
<dbReference type="GO" id="GO:0070814">
    <property type="term" value="P:hydrogen sulfide biosynthetic process"/>
    <property type="evidence" value="ECO:0007669"/>
    <property type="project" value="UniProtKB-UniRule"/>
</dbReference>
<dbReference type="GO" id="GO:0000103">
    <property type="term" value="P:sulfate assimilation"/>
    <property type="evidence" value="ECO:0007669"/>
    <property type="project" value="UniProtKB-UniRule"/>
</dbReference>
<dbReference type="FunFam" id="3.40.50.620:FF:000002">
    <property type="entry name" value="Sulfate adenylyltransferase subunit 2"/>
    <property type="match status" value="1"/>
</dbReference>
<dbReference type="Gene3D" id="3.40.50.620">
    <property type="entry name" value="HUPs"/>
    <property type="match status" value="1"/>
</dbReference>
<dbReference type="HAMAP" id="MF_00064">
    <property type="entry name" value="Sulf_adenylyltr_sub2"/>
    <property type="match status" value="1"/>
</dbReference>
<dbReference type="InterPro" id="IPR002500">
    <property type="entry name" value="PAPS_reduct_dom"/>
</dbReference>
<dbReference type="InterPro" id="IPR014729">
    <property type="entry name" value="Rossmann-like_a/b/a_fold"/>
</dbReference>
<dbReference type="InterPro" id="IPR011784">
    <property type="entry name" value="SO4_adenylTrfase_ssu"/>
</dbReference>
<dbReference type="InterPro" id="IPR050128">
    <property type="entry name" value="Sulfate_adenylyltrnsfr_sub2"/>
</dbReference>
<dbReference type="NCBIfam" id="TIGR02039">
    <property type="entry name" value="CysD"/>
    <property type="match status" value="1"/>
</dbReference>
<dbReference type="NCBIfam" id="NF003587">
    <property type="entry name" value="PRK05253.1"/>
    <property type="match status" value="1"/>
</dbReference>
<dbReference type="NCBIfam" id="NF009214">
    <property type="entry name" value="PRK12563.1"/>
    <property type="match status" value="1"/>
</dbReference>
<dbReference type="PANTHER" id="PTHR43196">
    <property type="entry name" value="SULFATE ADENYLYLTRANSFERASE SUBUNIT 2"/>
    <property type="match status" value="1"/>
</dbReference>
<dbReference type="PANTHER" id="PTHR43196:SF1">
    <property type="entry name" value="SULFATE ADENYLYLTRANSFERASE SUBUNIT 2"/>
    <property type="match status" value="1"/>
</dbReference>
<dbReference type="Pfam" id="PF01507">
    <property type="entry name" value="PAPS_reduct"/>
    <property type="match status" value="1"/>
</dbReference>
<dbReference type="PIRSF" id="PIRSF002936">
    <property type="entry name" value="CysDAde_trans"/>
    <property type="match status" value="1"/>
</dbReference>
<dbReference type="SUPFAM" id="SSF52402">
    <property type="entry name" value="Adenine nucleotide alpha hydrolases-like"/>
    <property type="match status" value="1"/>
</dbReference>